<proteinExistence type="evidence at transcript level"/>
<sequence length="343" mass="37841">MWPNASSLGPCFRPMNITLEERRLIASPWFAASFCLVGLASNLLALSVLMGARQGSSQSRSSFLTFLCGLVLTDFMGLLVTGAIVVTQHFVLFEWQAVDPGCSLCHFMGVIMVFFGLCPLLLGAAMASERFLGITRPFSRPATASQRRAWTTVGLVWASALALGLLPLLGVGHYTVQYPGSWCFLTLGTDPGDVAFGLLFALLGSISVGMSFLLNTISVATLCHVYHGQATAQQRPRDCEVEMMVQLMGIMVVASICWMPLLVFIAQTVLQSPPAMSPTGQLSRLTERQLLIYLRVATWNQILDPWVYILFRRAVIQRFYPRLSTRSRSLSLQPQLTRRSTIH</sequence>
<evidence type="ECO:0000250" key="1"/>
<evidence type="ECO:0000250" key="2">
    <source>
        <dbReference type="UniProtKB" id="P21731"/>
    </source>
</evidence>
<evidence type="ECO:0000250" key="3">
    <source>
        <dbReference type="UniProtKB" id="P30987"/>
    </source>
</evidence>
<evidence type="ECO:0000255" key="4"/>
<evidence type="ECO:0000255" key="5">
    <source>
        <dbReference type="PROSITE-ProRule" id="PRU00521"/>
    </source>
</evidence>
<dbReference type="EMBL" id="U53485">
    <property type="protein sequence ID" value="AAC34309.1"/>
    <property type="molecule type" value="Genomic_DNA"/>
</dbReference>
<dbReference type="EMBL" id="U53484">
    <property type="protein sequence ID" value="AAC34308.1"/>
    <property type="molecule type" value="mRNA"/>
</dbReference>
<dbReference type="RefSeq" id="NP_001161391.1">
    <property type="nucleotide sequence ID" value="NM_001167919.1"/>
</dbReference>
<dbReference type="RefSeq" id="XP_005209020.1">
    <property type="nucleotide sequence ID" value="XM_005208963.5"/>
</dbReference>
<dbReference type="SMR" id="Q95125"/>
<dbReference type="FunCoup" id="Q95125">
    <property type="interactions" value="322"/>
</dbReference>
<dbReference type="STRING" id="9913.ENSBTAP00000019892"/>
<dbReference type="GlyCosmos" id="Q95125">
    <property type="glycosylation" value="2 sites, No reported glycans"/>
</dbReference>
<dbReference type="GlyGen" id="Q95125">
    <property type="glycosylation" value="2 sites"/>
</dbReference>
<dbReference type="PaxDb" id="9913-ENSBTAP00000019892"/>
<dbReference type="Ensembl" id="ENSBTAT00000019892.5">
    <property type="protein sequence ID" value="ENSBTAP00000019892.3"/>
    <property type="gene ID" value="ENSBTAG00000014944.7"/>
</dbReference>
<dbReference type="GeneID" id="538783"/>
<dbReference type="KEGG" id="bta:538783"/>
<dbReference type="CTD" id="6915"/>
<dbReference type="VEuPathDB" id="HostDB:ENSBTAG00000014944"/>
<dbReference type="VGNC" id="VGNC:35673">
    <property type="gene designation" value="TBXA2R"/>
</dbReference>
<dbReference type="eggNOG" id="KOG3656">
    <property type="taxonomic scope" value="Eukaryota"/>
</dbReference>
<dbReference type="GeneTree" id="ENSGT01030000234559"/>
<dbReference type="HOGENOM" id="CLU_045991_3_0_1"/>
<dbReference type="InParanoid" id="Q95125"/>
<dbReference type="OMA" id="HAILFDW"/>
<dbReference type="OrthoDB" id="8631411at2759"/>
<dbReference type="TreeFam" id="TF324982"/>
<dbReference type="Reactome" id="R-BTA-391908">
    <property type="pathway name" value="Prostanoid ligand receptors"/>
</dbReference>
<dbReference type="Reactome" id="R-BTA-416476">
    <property type="pathway name" value="G alpha (q) signalling events"/>
</dbReference>
<dbReference type="Reactome" id="R-BTA-416482">
    <property type="pathway name" value="G alpha (12/13) signalling events"/>
</dbReference>
<dbReference type="Reactome" id="R-BTA-428930">
    <property type="pathway name" value="Thromboxane signalling through TP receptor"/>
</dbReference>
<dbReference type="Proteomes" id="UP000009136">
    <property type="component" value="Chromosome 7"/>
</dbReference>
<dbReference type="Bgee" id="ENSBTAG00000014944">
    <property type="expression patterns" value="Expressed in blood and 97 other cell types or tissues"/>
</dbReference>
<dbReference type="GO" id="GO:0005886">
    <property type="term" value="C:plasma membrane"/>
    <property type="evidence" value="ECO:0000318"/>
    <property type="project" value="GO_Central"/>
</dbReference>
<dbReference type="GO" id="GO:0004960">
    <property type="term" value="F:thromboxane receptor activity"/>
    <property type="evidence" value="ECO:0007669"/>
    <property type="project" value="InterPro"/>
</dbReference>
<dbReference type="GO" id="GO:0007189">
    <property type="term" value="P:adenylate cyclase-activating G protein-coupled receptor signaling pathway"/>
    <property type="evidence" value="ECO:0000318"/>
    <property type="project" value="GO_Central"/>
</dbReference>
<dbReference type="GO" id="GO:0006954">
    <property type="term" value="P:inflammatory response"/>
    <property type="evidence" value="ECO:0000318"/>
    <property type="project" value="GO_Central"/>
</dbReference>
<dbReference type="GO" id="GO:0045777">
    <property type="term" value="P:positive regulation of blood pressure"/>
    <property type="evidence" value="ECO:0000318"/>
    <property type="project" value="GO_Central"/>
</dbReference>
<dbReference type="GO" id="GO:0007204">
    <property type="term" value="P:positive regulation of cytosolic calcium ion concentration"/>
    <property type="evidence" value="ECO:0000318"/>
    <property type="project" value="GO_Central"/>
</dbReference>
<dbReference type="GO" id="GO:0045907">
    <property type="term" value="P:positive regulation of vasoconstriction"/>
    <property type="evidence" value="ECO:0000318"/>
    <property type="project" value="GO_Central"/>
</dbReference>
<dbReference type="FunFam" id="1.20.1070.10:FF:000163">
    <property type="entry name" value="Thromboxane A2 receptor"/>
    <property type="match status" value="1"/>
</dbReference>
<dbReference type="Gene3D" id="1.20.1070.10">
    <property type="entry name" value="Rhodopsin 7-helix transmembrane proteins"/>
    <property type="match status" value="1"/>
</dbReference>
<dbReference type="InterPro" id="IPR000276">
    <property type="entry name" value="GPCR_Rhodpsn"/>
</dbReference>
<dbReference type="InterPro" id="IPR017452">
    <property type="entry name" value="GPCR_Rhodpsn_7TM"/>
</dbReference>
<dbReference type="InterPro" id="IPR008365">
    <property type="entry name" value="Prostanoid_rcpt"/>
</dbReference>
<dbReference type="InterPro" id="IPR001105">
    <property type="entry name" value="Thbox_rcpt"/>
</dbReference>
<dbReference type="PANTHER" id="PTHR11866">
    <property type="entry name" value="G-PROTEIN COUPLED RECEPTOR FAMILY 1 MEMBER"/>
    <property type="match status" value="1"/>
</dbReference>
<dbReference type="PANTHER" id="PTHR11866:SF5">
    <property type="entry name" value="THROMBOXANE A2 RECEPTOR"/>
    <property type="match status" value="1"/>
</dbReference>
<dbReference type="Pfam" id="PF00001">
    <property type="entry name" value="7tm_1"/>
    <property type="match status" value="1"/>
</dbReference>
<dbReference type="PRINTS" id="PR01788">
    <property type="entry name" value="PROSTANOIDR"/>
</dbReference>
<dbReference type="PRINTS" id="PR00429">
    <property type="entry name" value="THROMBOXANER"/>
</dbReference>
<dbReference type="SUPFAM" id="SSF81321">
    <property type="entry name" value="Family A G protein-coupled receptor-like"/>
    <property type="match status" value="1"/>
</dbReference>
<dbReference type="PROSITE" id="PS00237">
    <property type="entry name" value="G_PROTEIN_RECEP_F1_1"/>
    <property type="match status" value="1"/>
</dbReference>
<dbReference type="PROSITE" id="PS50262">
    <property type="entry name" value="G_PROTEIN_RECEP_F1_2"/>
    <property type="match status" value="1"/>
</dbReference>
<protein>
    <recommendedName>
        <fullName>Thromboxane A2 receptor</fullName>
        <shortName>TXA2-R</shortName>
    </recommendedName>
    <alternativeName>
        <fullName>Prostanoid TP receptor</fullName>
    </alternativeName>
</protein>
<gene>
    <name type="primary">TBXA2R</name>
</gene>
<organism>
    <name type="scientific">Bos taurus</name>
    <name type="common">Bovine</name>
    <dbReference type="NCBI Taxonomy" id="9913"/>
    <lineage>
        <taxon>Eukaryota</taxon>
        <taxon>Metazoa</taxon>
        <taxon>Chordata</taxon>
        <taxon>Craniata</taxon>
        <taxon>Vertebrata</taxon>
        <taxon>Euteleostomi</taxon>
        <taxon>Mammalia</taxon>
        <taxon>Eutheria</taxon>
        <taxon>Laurasiatheria</taxon>
        <taxon>Artiodactyla</taxon>
        <taxon>Ruminantia</taxon>
        <taxon>Pecora</taxon>
        <taxon>Bovidae</taxon>
        <taxon>Bovinae</taxon>
        <taxon>Bos</taxon>
    </lineage>
</organism>
<feature type="chain" id="PRO_0000070136" description="Thromboxane A2 receptor">
    <location>
        <begin position="1"/>
        <end position="343"/>
    </location>
</feature>
<feature type="topological domain" description="Extracellular" evidence="4">
    <location>
        <begin position="1"/>
        <end position="29"/>
    </location>
</feature>
<feature type="transmembrane region" description="Helical; Name=1" evidence="4">
    <location>
        <begin position="30"/>
        <end position="52"/>
    </location>
</feature>
<feature type="topological domain" description="Cytoplasmic" evidence="4">
    <location>
        <begin position="53"/>
        <end position="66"/>
    </location>
</feature>
<feature type="transmembrane region" description="Helical; Name=2" evidence="4">
    <location>
        <begin position="67"/>
        <end position="87"/>
    </location>
</feature>
<feature type="topological domain" description="Extracellular" evidence="4">
    <location>
        <begin position="88"/>
        <end position="106"/>
    </location>
</feature>
<feature type="transmembrane region" description="Helical; Name=3" evidence="4">
    <location>
        <begin position="107"/>
        <end position="128"/>
    </location>
</feature>
<feature type="topological domain" description="Cytoplasmic" evidence="4">
    <location>
        <begin position="129"/>
        <end position="149"/>
    </location>
</feature>
<feature type="transmembrane region" description="Helical; Name=4" evidence="4">
    <location>
        <begin position="150"/>
        <end position="172"/>
    </location>
</feature>
<feature type="topological domain" description="Extracellular" evidence="4">
    <location>
        <begin position="173"/>
        <end position="193"/>
    </location>
</feature>
<feature type="transmembrane region" description="Helical; Name=5" evidence="4">
    <location>
        <begin position="194"/>
        <end position="219"/>
    </location>
</feature>
<feature type="topological domain" description="Cytoplasmic" evidence="4">
    <location>
        <begin position="220"/>
        <end position="246"/>
    </location>
</feature>
<feature type="transmembrane region" description="Helical; Name=6" evidence="4">
    <location>
        <begin position="247"/>
        <end position="270"/>
    </location>
</feature>
<feature type="topological domain" description="Extracellular" evidence="4">
    <location>
        <begin position="271"/>
        <end position="289"/>
    </location>
</feature>
<feature type="transmembrane region" description="Helical; Name=7" evidence="4">
    <location>
        <begin position="290"/>
        <end position="311"/>
    </location>
</feature>
<feature type="topological domain" description="Cytoplasmic" evidence="4">
    <location>
        <begin position="312"/>
        <end position="343"/>
    </location>
</feature>
<feature type="modified residue" description="Phosphoserine" evidence="2">
    <location>
        <position position="329"/>
    </location>
</feature>
<feature type="modified residue" description="Phosphoserine" evidence="3">
    <location>
        <position position="331"/>
    </location>
</feature>
<feature type="glycosylation site" description="N-linked (GlcNAc...) asparagine" evidence="4">
    <location>
        <position position="4"/>
    </location>
</feature>
<feature type="glycosylation site" description="N-linked (GlcNAc...) asparagine" evidence="4">
    <location>
        <position position="16"/>
    </location>
</feature>
<feature type="disulfide bond" evidence="5">
    <location>
        <begin position="105"/>
        <end position="183"/>
    </location>
</feature>
<comment type="function">
    <text>Receptor for thromboxane A2 (TXA2), a potent stimulator of platelet aggregation. The activity of this receptor is mediated by a G-protein that activates a phosphatidylinositol-calcium second messenger system. In the kidney, the binding of TXA2 to glomerular TP receptors causes intense vasoconstriction. Activates phospholipase C and adenylyl cyclase.</text>
</comment>
<comment type="subunit">
    <text evidence="1">Interacts with RPGRIP1L. Interacts with RACK1; the interaction regulates TBXA2R cell surface expression (By similarity).</text>
</comment>
<comment type="subcellular location">
    <subcellularLocation>
        <location>Cell membrane</location>
        <topology>Multi-pass membrane protein</topology>
    </subcellularLocation>
</comment>
<comment type="similarity">
    <text evidence="5">Belongs to the G-protein coupled receptor 1 family.</text>
</comment>
<accession>Q95125</accession>
<accession>Q95124</accession>
<name>TA2R_BOVIN</name>
<reference key="1">
    <citation type="journal article" date="1997" name="Adv. Exp. Med. Biol.">
        <title>Cloning, tissue-specific expression and regulation of the bovine thromboxane A2 receptor.</title>
        <authorList>
            <person name="Muck S."/>
            <person name="Schroer K."/>
        </authorList>
    </citation>
    <scope>NUCLEOTIDE SEQUENCE [GENOMIC DNA / MRNA]</scope>
    <source>
        <tissue>Heart</tissue>
        <tissue>Liver</tissue>
    </source>
</reference>
<keyword id="KW-1003">Cell membrane</keyword>
<keyword id="KW-1015">Disulfide bond</keyword>
<keyword id="KW-0297">G-protein coupled receptor</keyword>
<keyword id="KW-0325">Glycoprotein</keyword>
<keyword id="KW-0472">Membrane</keyword>
<keyword id="KW-0597">Phosphoprotein</keyword>
<keyword id="KW-0675">Receptor</keyword>
<keyword id="KW-1185">Reference proteome</keyword>
<keyword id="KW-0807">Transducer</keyword>
<keyword id="KW-0812">Transmembrane</keyword>
<keyword id="KW-1133">Transmembrane helix</keyword>